<organism>
    <name type="scientific">Xenopus laevis</name>
    <name type="common">African clawed frog</name>
    <dbReference type="NCBI Taxonomy" id="8355"/>
    <lineage>
        <taxon>Eukaryota</taxon>
        <taxon>Metazoa</taxon>
        <taxon>Chordata</taxon>
        <taxon>Craniata</taxon>
        <taxon>Vertebrata</taxon>
        <taxon>Euteleostomi</taxon>
        <taxon>Amphibia</taxon>
        <taxon>Batrachia</taxon>
        <taxon>Anura</taxon>
        <taxon>Pipoidea</taxon>
        <taxon>Pipidae</taxon>
        <taxon>Xenopodinae</taxon>
        <taxon>Xenopus</taxon>
        <taxon>Xenopus</taxon>
    </lineage>
</organism>
<accession>P01212</accession>
<proteinExistence type="inferred from homology"/>
<protein>
    <recommendedName>
        <fullName>Proenkephalin-A-A</fullName>
    </recommendedName>
    <component>
        <recommendedName>
            <fullName>Synenkephalin</fullName>
        </recommendedName>
    </component>
    <component>
        <recommendedName>
            <fullName>Met-enkephalin</fullName>
        </recommendedName>
    </component>
    <component>
        <recommendedName>
            <fullName>Met-enkephalin-Arg-Gly-Tyr</fullName>
        </recommendedName>
    </component>
    <component>
        <recommendedName>
            <fullName>Met-enkephalin-Arg-Phe</fullName>
        </recommendedName>
    </component>
</protein>
<feature type="signal peptide" evidence="2">
    <location>
        <begin position="1"/>
        <end position="24"/>
    </location>
</feature>
<feature type="peptide" id="PRO_0000008294" description="Synenkephalin">
    <location>
        <begin position="25"/>
        <end position="93"/>
    </location>
</feature>
<feature type="peptide" id="PRO_0000008295" description="Met-enkephalin">
    <location>
        <begin position="96"/>
        <end position="100"/>
    </location>
</feature>
<feature type="peptide" id="PRO_0000008296" description="Met-enkephalin">
    <location>
        <begin position="103"/>
        <end position="107"/>
    </location>
</feature>
<feature type="propeptide" id="PRO_0000008297">
    <location>
        <begin position="110"/>
        <end position="131"/>
    </location>
</feature>
<feature type="peptide" id="PRO_0000008298" description="Met-enkephalin">
    <location>
        <begin position="132"/>
        <end position="136"/>
    </location>
</feature>
<feature type="propeptide" id="PRO_0000008299">
    <location>
        <begin position="139"/>
        <end position="177"/>
    </location>
</feature>
<feature type="peptide" id="PRO_0000008300" description="Met-enkephalin-Arg-Gly-Tyr">
    <location>
        <begin position="180"/>
        <end position="187"/>
    </location>
</feature>
<feature type="propeptide" id="PRO_0000008301">
    <location>
        <begin position="190"/>
        <end position="201"/>
    </location>
</feature>
<feature type="peptide" id="PRO_0000008302" description="Met-enkephalin">
    <location>
        <begin position="204"/>
        <end position="208"/>
    </location>
</feature>
<feature type="propeptide" id="PRO_0000008303">
    <location>
        <begin position="211"/>
        <end position="221"/>
    </location>
</feature>
<feature type="peptide" id="PRO_0000008304" description="Met-enkephalin">
    <location>
        <begin position="224"/>
        <end position="228"/>
    </location>
</feature>
<feature type="propeptide" id="PRO_0000008305">
    <location>
        <begin position="229"/>
        <end position="253"/>
    </location>
</feature>
<feature type="peptide" id="PRO_0000008306" description="Met-enkephalin-Arg-Phe">
    <location>
        <begin position="256"/>
        <end position="262"/>
    </location>
</feature>
<feature type="disulfide bond" evidence="1">
    <location>
        <begin position="26"/>
        <end position="48"/>
    </location>
</feature>
<feature type="disulfide bond" evidence="1">
    <location>
        <begin position="30"/>
        <end position="52"/>
    </location>
</feature>
<feature type="disulfide bond" evidence="1">
    <location>
        <begin position="33"/>
        <end position="65"/>
    </location>
</feature>
<name>PENKA_XENLA</name>
<keyword id="KW-0165">Cleavage on pair of basic residues</keyword>
<keyword id="KW-1015">Disulfide bond</keyword>
<keyword id="KW-0257">Endorphin</keyword>
<keyword id="KW-0527">Neuropeptide</keyword>
<keyword id="KW-0555">Opioid peptide</keyword>
<keyword id="KW-1185">Reference proteome</keyword>
<keyword id="KW-0964">Secreted</keyword>
<keyword id="KW-0732">Signal</keyword>
<dbReference type="EMBL" id="S72932">
    <property type="protein sequence ID" value="AAB20686.1"/>
    <property type="molecule type" value="Genomic_DNA"/>
</dbReference>
<dbReference type="EMBL" id="S72930">
    <property type="protein sequence ID" value="AAB20686.1"/>
    <property type="status" value="JOINED"/>
    <property type="molecule type" value="Genomic_DNA"/>
</dbReference>
<dbReference type="EMBL" id="X00852">
    <property type="protein sequence ID" value="CAA25405.1"/>
    <property type="molecule type" value="Genomic_DNA"/>
</dbReference>
<dbReference type="PIR" id="A43949">
    <property type="entry name" value="EQXL"/>
</dbReference>
<dbReference type="AGR" id="Xenbase:XB-GENE-17343976"/>
<dbReference type="Xenbase" id="XB-GENE-17343976">
    <property type="gene designation" value="penk.S"/>
</dbReference>
<dbReference type="Proteomes" id="UP000186698">
    <property type="component" value="Unplaced"/>
</dbReference>
<dbReference type="GO" id="GO:0043679">
    <property type="term" value="C:axon terminus"/>
    <property type="evidence" value="ECO:0000318"/>
    <property type="project" value="GO_Central"/>
</dbReference>
<dbReference type="GO" id="GO:0030425">
    <property type="term" value="C:dendrite"/>
    <property type="evidence" value="ECO:0000318"/>
    <property type="project" value="GO_Central"/>
</dbReference>
<dbReference type="GO" id="GO:0005576">
    <property type="term" value="C:extracellular region"/>
    <property type="evidence" value="ECO:0007669"/>
    <property type="project" value="UniProtKB-SubCell"/>
</dbReference>
<dbReference type="GO" id="GO:0043025">
    <property type="term" value="C:neuronal cell body"/>
    <property type="evidence" value="ECO:0000318"/>
    <property type="project" value="GO_Central"/>
</dbReference>
<dbReference type="GO" id="GO:0005886">
    <property type="term" value="C:plasma membrane"/>
    <property type="evidence" value="ECO:0000318"/>
    <property type="project" value="GO_Central"/>
</dbReference>
<dbReference type="GO" id="GO:0001515">
    <property type="term" value="F:opioid peptide activity"/>
    <property type="evidence" value="ECO:0007669"/>
    <property type="project" value="UniProtKB-KW"/>
</dbReference>
<dbReference type="GO" id="GO:0031628">
    <property type="term" value="F:opioid receptor binding"/>
    <property type="evidence" value="ECO:0007669"/>
    <property type="project" value="TreeGrafter"/>
</dbReference>
<dbReference type="GO" id="GO:0007268">
    <property type="term" value="P:chemical synaptic transmission"/>
    <property type="evidence" value="ECO:0000318"/>
    <property type="project" value="GO_Central"/>
</dbReference>
<dbReference type="GO" id="GO:0007218">
    <property type="term" value="P:neuropeptide signaling pathway"/>
    <property type="evidence" value="ECO:0000318"/>
    <property type="project" value="GO_Central"/>
</dbReference>
<dbReference type="GO" id="GO:0007600">
    <property type="term" value="P:sensory perception"/>
    <property type="evidence" value="ECO:0000318"/>
    <property type="project" value="GO_Central"/>
</dbReference>
<dbReference type="InterPro" id="IPR006024">
    <property type="entry name" value="Opioid_neupept"/>
</dbReference>
<dbReference type="InterPro" id="IPR000703">
    <property type="entry name" value="Proenkphlin_A"/>
</dbReference>
<dbReference type="PANTHER" id="PTHR11438">
    <property type="entry name" value="PROENKEPHALIN"/>
    <property type="match status" value="1"/>
</dbReference>
<dbReference type="PANTHER" id="PTHR11438:SF3">
    <property type="entry name" value="PROENKEPHALIN-A"/>
    <property type="match status" value="1"/>
</dbReference>
<dbReference type="Pfam" id="PF01160">
    <property type="entry name" value="Opiods_neuropep"/>
    <property type="match status" value="1"/>
</dbReference>
<dbReference type="PRINTS" id="PR01028">
    <property type="entry name" value="OPIOIDPRCRSR"/>
</dbReference>
<dbReference type="PRINTS" id="PR01029">
    <property type="entry name" value="PENKAPRCRSR"/>
</dbReference>
<dbReference type="PROSITE" id="PS01252">
    <property type="entry name" value="OPIOIDS_PRECURSOR"/>
    <property type="match status" value="1"/>
</dbReference>
<evidence type="ECO:0000250" key="1">
    <source>
        <dbReference type="UniProtKB" id="P01210"/>
    </source>
</evidence>
<evidence type="ECO:0000255" key="2"/>
<evidence type="ECO:0000305" key="3"/>
<gene>
    <name type="primary">penk-a</name>
</gene>
<sequence>MGLEARHCCMFLLVFASLSVEIRADCSKDCASCALHLGQQREINSLACTLECEGKLPSAKAWGTCKELLLLTKVDNVQDGEKYQDNNDSHYAAKKYGGFMKRYGGFMKKMDELYHAEPEEDDAGGEILAKNYGGFMKKEYDSDRDAADLLRELLATSGDPESSIYHDNNSETPGEINKRYGGFMRGYRRSTDLEDETSGIQKRYGGFMRRVGRPEWWEDYQKRYGGFMTRFTDSFLPSDEDGESYSKENPDMEKRYGGFMRF</sequence>
<comment type="function">
    <text evidence="1">Enkephalin neuropeptides compete with and mimic the effects of opiate drugs. They play a role in a number of physiologic functions, including pain perception and responses to stress.</text>
</comment>
<comment type="subcellular location">
    <subcellularLocation>
        <location evidence="1">Secreted</location>
    </subcellularLocation>
</comment>
<comment type="PTM">
    <text evidence="1">The N-terminal domain contains 6 conserved cysteines thought to be involved in disulfide bonding and/or processing.</text>
</comment>
<comment type="similarity">
    <text evidence="3">Belongs to the opioid neuropeptide precursor family.</text>
</comment>
<reference key="1">
    <citation type="journal article" date="1991" name="Brain Res. Mol. Brain Res.">
        <title>Characterization of Xenopus laevis proenkephalin gene.</title>
        <authorList>
            <person name="Wong M."/>
            <person name="Rius R.A."/>
            <person name="Loh Y.P."/>
        </authorList>
    </citation>
    <scope>NUCLEOTIDE SEQUENCE [GENOMIC DNA]</scope>
</reference>
<reference key="2">
    <citation type="journal article" date="1984" name="Nature">
        <title>Polymorphism and absence of Leu-enkephalin sequences in proenkephalin genes in Xenopus laevis.</title>
        <authorList>
            <person name="Martens G.J.M."/>
            <person name="Herbert E."/>
        </authorList>
    </citation>
    <scope>NUCLEOTIDE SEQUENCE [GENOMIC DNA] OF 47-262</scope>
</reference>